<feature type="chain" id="PRO_1000205122" description="Probable GTP-binding protein EngB">
    <location>
        <begin position="1"/>
        <end position="194"/>
    </location>
</feature>
<feature type="domain" description="EngB-type G" evidence="1">
    <location>
        <begin position="22"/>
        <end position="194"/>
    </location>
</feature>
<feature type="binding site" evidence="1">
    <location>
        <begin position="30"/>
        <end position="37"/>
    </location>
    <ligand>
        <name>GTP</name>
        <dbReference type="ChEBI" id="CHEBI:37565"/>
    </ligand>
</feature>
<feature type="binding site" evidence="1">
    <location>
        <position position="37"/>
    </location>
    <ligand>
        <name>Mg(2+)</name>
        <dbReference type="ChEBI" id="CHEBI:18420"/>
    </ligand>
</feature>
<feature type="binding site" evidence="1">
    <location>
        <begin position="57"/>
        <end position="61"/>
    </location>
    <ligand>
        <name>GTP</name>
        <dbReference type="ChEBI" id="CHEBI:37565"/>
    </ligand>
</feature>
<feature type="binding site" evidence="1">
    <location>
        <position position="59"/>
    </location>
    <ligand>
        <name>Mg(2+)</name>
        <dbReference type="ChEBI" id="CHEBI:18420"/>
    </ligand>
</feature>
<feature type="binding site" evidence="1">
    <location>
        <begin position="75"/>
        <end position="78"/>
    </location>
    <ligand>
        <name>GTP</name>
        <dbReference type="ChEBI" id="CHEBI:37565"/>
    </ligand>
</feature>
<feature type="binding site" evidence="1">
    <location>
        <begin position="142"/>
        <end position="145"/>
    </location>
    <ligand>
        <name>GTP</name>
        <dbReference type="ChEBI" id="CHEBI:37565"/>
    </ligand>
</feature>
<feature type="binding site" evidence="1">
    <location>
        <begin position="173"/>
        <end position="175"/>
    </location>
    <ligand>
        <name>GTP</name>
        <dbReference type="ChEBI" id="CHEBI:37565"/>
    </ligand>
</feature>
<name>ENGB_DESAH</name>
<protein>
    <recommendedName>
        <fullName evidence="1">Probable GTP-binding protein EngB</fullName>
    </recommendedName>
</protein>
<gene>
    <name evidence="1" type="primary">engB</name>
    <name type="ordered locus">HRM2_10790</name>
</gene>
<accession>C0QLA5</accession>
<reference key="1">
    <citation type="journal article" date="2009" name="Environ. Microbiol.">
        <title>Genome sequence of Desulfobacterium autotrophicum HRM2, a marine sulfate reducer oxidizing organic carbon completely to carbon dioxide.</title>
        <authorList>
            <person name="Strittmatter A.W."/>
            <person name="Liesegang H."/>
            <person name="Rabus R."/>
            <person name="Decker I."/>
            <person name="Amann J."/>
            <person name="Andres S."/>
            <person name="Henne A."/>
            <person name="Fricke W.F."/>
            <person name="Martinez-Arias R."/>
            <person name="Bartels D."/>
            <person name="Goesmann A."/>
            <person name="Krause L."/>
            <person name="Puehler A."/>
            <person name="Klenk H.P."/>
            <person name="Richter M."/>
            <person name="Schuler M."/>
            <person name="Gloeckner F.O."/>
            <person name="Meyerdierks A."/>
            <person name="Gottschalk G."/>
            <person name="Amann R."/>
        </authorList>
    </citation>
    <scope>NUCLEOTIDE SEQUENCE [LARGE SCALE GENOMIC DNA]</scope>
    <source>
        <strain>ATCC 43914 / DSM 3382 / VKM B-1955 / HRM2</strain>
    </source>
</reference>
<proteinExistence type="inferred from homology"/>
<organism>
    <name type="scientific">Desulforapulum autotrophicum (strain ATCC 43914 / DSM 3382 / VKM B-1955 / HRM2)</name>
    <name type="common">Desulfobacterium autotrophicum</name>
    <dbReference type="NCBI Taxonomy" id="177437"/>
    <lineage>
        <taxon>Bacteria</taxon>
        <taxon>Pseudomonadati</taxon>
        <taxon>Thermodesulfobacteriota</taxon>
        <taxon>Desulfobacteria</taxon>
        <taxon>Desulfobacterales</taxon>
        <taxon>Desulfobacteraceae</taxon>
        <taxon>Desulforapulum</taxon>
    </lineage>
</organism>
<comment type="function">
    <text evidence="1">Necessary for normal cell division and for the maintenance of normal septation.</text>
</comment>
<comment type="cofactor">
    <cofactor evidence="1">
        <name>Mg(2+)</name>
        <dbReference type="ChEBI" id="CHEBI:18420"/>
    </cofactor>
</comment>
<comment type="similarity">
    <text evidence="1">Belongs to the TRAFAC class TrmE-Era-EngA-EngB-Septin-like GTPase superfamily. EngB GTPase family.</text>
</comment>
<evidence type="ECO:0000255" key="1">
    <source>
        <dbReference type="HAMAP-Rule" id="MF_00321"/>
    </source>
</evidence>
<keyword id="KW-0131">Cell cycle</keyword>
<keyword id="KW-0132">Cell division</keyword>
<keyword id="KW-0342">GTP-binding</keyword>
<keyword id="KW-0460">Magnesium</keyword>
<keyword id="KW-0479">Metal-binding</keyword>
<keyword id="KW-0547">Nucleotide-binding</keyword>
<keyword id="KW-1185">Reference proteome</keyword>
<keyword id="KW-0717">Septation</keyword>
<dbReference type="EMBL" id="CP001087">
    <property type="protein sequence ID" value="ACN14191.1"/>
    <property type="molecule type" value="Genomic_DNA"/>
</dbReference>
<dbReference type="RefSeq" id="WP_015902980.1">
    <property type="nucleotide sequence ID" value="NC_012108.1"/>
</dbReference>
<dbReference type="SMR" id="C0QLA5"/>
<dbReference type="STRING" id="177437.HRM2_10790"/>
<dbReference type="KEGG" id="dat:HRM2_10790"/>
<dbReference type="eggNOG" id="COG0218">
    <property type="taxonomic scope" value="Bacteria"/>
</dbReference>
<dbReference type="HOGENOM" id="CLU_033732_3_0_7"/>
<dbReference type="OrthoDB" id="9804921at2"/>
<dbReference type="Proteomes" id="UP000000442">
    <property type="component" value="Chromosome"/>
</dbReference>
<dbReference type="GO" id="GO:0005829">
    <property type="term" value="C:cytosol"/>
    <property type="evidence" value="ECO:0007669"/>
    <property type="project" value="TreeGrafter"/>
</dbReference>
<dbReference type="GO" id="GO:0005525">
    <property type="term" value="F:GTP binding"/>
    <property type="evidence" value="ECO:0007669"/>
    <property type="project" value="UniProtKB-UniRule"/>
</dbReference>
<dbReference type="GO" id="GO:0046872">
    <property type="term" value="F:metal ion binding"/>
    <property type="evidence" value="ECO:0007669"/>
    <property type="project" value="UniProtKB-KW"/>
</dbReference>
<dbReference type="GO" id="GO:0000917">
    <property type="term" value="P:division septum assembly"/>
    <property type="evidence" value="ECO:0007669"/>
    <property type="project" value="UniProtKB-KW"/>
</dbReference>
<dbReference type="CDD" id="cd01876">
    <property type="entry name" value="YihA_EngB"/>
    <property type="match status" value="1"/>
</dbReference>
<dbReference type="FunFam" id="3.40.50.300:FF:000098">
    <property type="entry name" value="Probable GTP-binding protein EngB"/>
    <property type="match status" value="1"/>
</dbReference>
<dbReference type="Gene3D" id="3.40.50.300">
    <property type="entry name" value="P-loop containing nucleotide triphosphate hydrolases"/>
    <property type="match status" value="1"/>
</dbReference>
<dbReference type="HAMAP" id="MF_00321">
    <property type="entry name" value="GTPase_EngB"/>
    <property type="match status" value="1"/>
</dbReference>
<dbReference type="InterPro" id="IPR030393">
    <property type="entry name" value="G_ENGB_dom"/>
</dbReference>
<dbReference type="InterPro" id="IPR006073">
    <property type="entry name" value="GTP-bd"/>
</dbReference>
<dbReference type="InterPro" id="IPR019987">
    <property type="entry name" value="GTP-bd_ribosome_bio_YsxC"/>
</dbReference>
<dbReference type="InterPro" id="IPR027417">
    <property type="entry name" value="P-loop_NTPase"/>
</dbReference>
<dbReference type="InterPro" id="IPR005225">
    <property type="entry name" value="Small_GTP-bd"/>
</dbReference>
<dbReference type="NCBIfam" id="TIGR03598">
    <property type="entry name" value="GTPase_YsxC"/>
    <property type="match status" value="1"/>
</dbReference>
<dbReference type="NCBIfam" id="TIGR00231">
    <property type="entry name" value="small_GTP"/>
    <property type="match status" value="1"/>
</dbReference>
<dbReference type="PANTHER" id="PTHR11649:SF13">
    <property type="entry name" value="ENGB-TYPE G DOMAIN-CONTAINING PROTEIN"/>
    <property type="match status" value="1"/>
</dbReference>
<dbReference type="PANTHER" id="PTHR11649">
    <property type="entry name" value="MSS1/TRME-RELATED GTP-BINDING PROTEIN"/>
    <property type="match status" value="1"/>
</dbReference>
<dbReference type="Pfam" id="PF01926">
    <property type="entry name" value="MMR_HSR1"/>
    <property type="match status" value="1"/>
</dbReference>
<dbReference type="SUPFAM" id="SSF52540">
    <property type="entry name" value="P-loop containing nucleoside triphosphate hydrolases"/>
    <property type="match status" value="1"/>
</dbReference>
<dbReference type="PROSITE" id="PS51706">
    <property type="entry name" value="G_ENGB"/>
    <property type="match status" value="1"/>
</dbReference>
<sequence>MIIKDVEFIKSATKPSEYTEPLFLEVAFAGRSNVGKSSLINTLINRKSLVKTSSKPGCTQLINFFLLNGNLSLVDLPGYGYAKVSKKIRAQWGPMIERYLTVRETLRAIVLLIDMRREPQREELDLINWFTAHAIPYRIVLTKADKLSKTKQQKNISAIAKGLGMEQDRLIAFSSKTRLGRDRLWQELDTMLNP</sequence>